<gene>
    <name evidence="1" type="primary">rplO</name>
    <name type="ordered locus">Oter_0208</name>
</gene>
<protein>
    <recommendedName>
        <fullName evidence="1">Large ribosomal subunit protein uL15</fullName>
    </recommendedName>
    <alternativeName>
        <fullName evidence="3">50S ribosomal protein L15</fullName>
    </alternativeName>
</protein>
<evidence type="ECO:0000255" key="1">
    <source>
        <dbReference type="HAMAP-Rule" id="MF_01341"/>
    </source>
</evidence>
<evidence type="ECO:0000256" key="2">
    <source>
        <dbReference type="SAM" id="MobiDB-lite"/>
    </source>
</evidence>
<evidence type="ECO:0000305" key="3"/>
<dbReference type="EMBL" id="CP001032">
    <property type="protein sequence ID" value="ACB73499.1"/>
    <property type="molecule type" value="Genomic_DNA"/>
</dbReference>
<dbReference type="RefSeq" id="WP_012373037.1">
    <property type="nucleotide sequence ID" value="NC_010571.1"/>
</dbReference>
<dbReference type="SMR" id="B1ZND0"/>
<dbReference type="STRING" id="452637.Oter_0208"/>
<dbReference type="KEGG" id="ote:Oter_0208"/>
<dbReference type="eggNOG" id="COG0200">
    <property type="taxonomic scope" value="Bacteria"/>
</dbReference>
<dbReference type="HOGENOM" id="CLU_055188_4_2_0"/>
<dbReference type="OrthoDB" id="9810293at2"/>
<dbReference type="Proteomes" id="UP000007013">
    <property type="component" value="Chromosome"/>
</dbReference>
<dbReference type="GO" id="GO:0022625">
    <property type="term" value="C:cytosolic large ribosomal subunit"/>
    <property type="evidence" value="ECO:0007669"/>
    <property type="project" value="TreeGrafter"/>
</dbReference>
<dbReference type="GO" id="GO:0019843">
    <property type="term" value="F:rRNA binding"/>
    <property type="evidence" value="ECO:0007669"/>
    <property type="project" value="UniProtKB-UniRule"/>
</dbReference>
<dbReference type="GO" id="GO:0003735">
    <property type="term" value="F:structural constituent of ribosome"/>
    <property type="evidence" value="ECO:0007669"/>
    <property type="project" value="InterPro"/>
</dbReference>
<dbReference type="GO" id="GO:0006412">
    <property type="term" value="P:translation"/>
    <property type="evidence" value="ECO:0007669"/>
    <property type="project" value="UniProtKB-UniRule"/>
</dbReference>
<dbReference type="Gene3D" id="3.100.10.10">
    <property type="match status" value="1"/>
</dbReference>
<dbReference type="HAMAP" id="MF_01341">
    <property type="entry name" value="Ribosomal_uL15"/>
    <property type="match status" value="1"/>
</dbReference>
<dbReference type="InterPro" id="IPR030878">
    <property type="entry name" value="Ribosomal_uL15"/>
</dbReference>
<dbReference type="InterPro" id="IPR021131">
    <property type="entry name" value="Ribosomal_uL15/eL18"/>
</dbReference>
<dbReference type="InterPro" id="IPR036227">
    <property type="entry name" value="Ribosomal_uL15/eL18_sf"/>
</dbReference>
<dbReference type="InterPro" id="IPR005749">
    <property type="entry name" value="Ribosomal_uL15_bac-type"/>
</dbReference>
<dbReference type="InterPro" id="IPR001196">
    <property type="entry name" value="Ribosomal_uL15_CS"/>
</dbReference>
<dbReference type="NCBIfam" id="TIGR01071">
    <property type="entry name" value="rplO_bact"/>
    <property type="match status" value="1"/>
</dbReference>
<dbReference type="PANTHER" id="PTHR12934">
    <property type="entry name" value="50S RIBOSOMAL PROTEIN L15"/>
    <property type="match status" value="1"/>
</dbReference>
<dbReference type="PANTHER" id="PTHR12934:SF11">
    <property type="entry name" value="LARGE RIBOSOMAL SUBUNIT PROTEIN UL15M"/>
    <property type="match status" value="1"/>
</dbReference>
<dbReference type="Pfam" id="PF00828">
    <property type="entry name" value="Ribosomal_L27A"/>
    <property type="match status" value="1"/>
</dbReference>
<dbReference type="SUPFAM" id="SSF52080">
    <property type="entry name" value="Ribosomal proteins L15p and L18e"/>
    <property type="match status" value="1"/>
</dbReference>
<dbReference type="PROSITE" id="PS00475">
    <property type="entry name" value="RIBOSOMAL_L15"/>
    <property type="match status" value="1"/>
</dbReference>
<sequence>MKLHELKNVKGAVHRKKRVGCGEGGGHGKTSGRGGKGQTARSGSSIRPGFEGGQMPLYRKLPHRGFNQYNFRTELPVVNVGDLASLDASITEVTAEVLAAQGLIRAGETSVKILGDGELSRALKVTAVKFSESAKAKIEKAGGQAITA</sequence>
<comment type="function">
    <text evidence="1">Binds to the 23S rRNA.</text>
</comment>
<comment type="subunit">
    <text evidence="1">Part of the 50S ribosomal subunit.</text>
</comment>
<comment type="similarity">
    <text evidence="1">Belongs to the universal ribosomal protein uL15 family.</text>
</comment>
<feature type="chain" id="PRO_1000142852" description="Large ribosomal subunit protein uL15">
    <location>
        <begin position="1"/>
        <end position="148"/>
    </location>
</feature>
<feature type="region of interest" description="Disordered" evidence="2">
    <location>
        <begin position="14"/>
        <end position="54"/>
    </location>
</feature>
<feature type="compositionally biased region" description="Gly residues" evidence="2">
    <location>
        <begin position="21"/>
        <end position="37"/>
    </location>
</feature>
<reference key="1">
    <citation type="journal article" date="2011" name="J. Bacteriol.">
        <title>Genome sequence of the verrucomicrobium Opitutus terrae PB90-1, an abundant inhabitant of rice paddy soil ecosystems.</title>
        <authorList>
            <person name="van Passel M.W."/>
            <person name="Kant R."/>
            <person name="Palva A."/>
            <person name="Copeland A."/>
            <person name="Lucas S."/>
            <person name="Lapidus A."/>
            <person name="Glavina del Rio T."/>
            <person name="Pitluck S."/>
            <person name="Goltsman E."/>
            <person name="Clum A."/>
            <person name="Sun H."/>
            <person name="Schmutz J."/>
            <person name="Larimer F.W."/>
            <person name="Land M.L."/>
            <person name="Hauser L."/>
            <person name="Kyrpides N."/>
            <person name="Mikhailova N."/>
            <person name="Richardson P.P."/>
            <person name="Janssen P.H."/>
            <person name="de Vos W.M."/>
            <person name="Smidt H."/>
        </authorList>
    </citation>
    <scope>NUCLEOTIDE SEQUENCE [LARGE SCALE GENOMIC DNA]</scope>
    <source>
        <strain>DSM 11246 / JCM 15787 / PB90-1</strain>
    </source>
</reference>
<keyword id="KW-1185">Reference proteome</keyword>
<keyword id="KW-0687">Ribonucleoprotein</keyword>
<keyword id="KW-0689">Ribosomal protein</keyword>
<keyword id="KW-0694">RNA-binding</keyword>
<keyword id="KW-0699">rRNA-binding</keyword>
<proteinExistence type="inferred from homology"/>
<organism>
    <name type="scientific">Opitutus terrae (strain DSM 11246 / JCM 15787 / PB90-1)</name>
    <dbReference type="NCBI Taxonomy" id="452637"/>
    <lineage>
        <taxon>Bacteria</taxon>
        <taxon>Pseudomonadati</taxon>
        <taxon>Verrucomicrobiota</taxon>
        <taxon>Opitutia</taxon>
        <taxon>Opitutales</taxon>
        <taxon>Opitutaceae</taxon>
        <taxon>Opitutus</taxon>
    </lineage>
</organism>
<accession>B1ZND0</accession>
<name>RL15_OPITP</name>